<proteinExistence type="inferred from homology"/>
<feature type="chain" id="PRO_0000249728" description="c-Myc-binding protein">
    <location>
        <begin position="1"/>
        <end position="103"/>
    </location>
</feature>
<evidence type="ECO:0000250" key="1"/>
<evidence type="ECO:0000250" key="2">
    <source>
        <dbReference type="UniProtKB" id="Q99417"/>
    </source>
</evidence>
<evidence type="ECO:0000305" key="3"/>
<organism>
    <name type="scientific">Bos taurus</name>
    <name type="common">Bovine</name>
    <dbReference type="NCBI Taxonomy" id="9913"/>
    <lineage>
        <taxon>Eukaryota</taxon>
        <taxon>Metazoa</taxon>
        <taxon>Chordata</taxon>
        <taxon>Craniata</taxon>
        <taxon>Vertebrata</taxon>
        <taxon>Euteleostomi</taxon>
        <taxon>Mammalia</taxon>
        <taxon>Eutheria</taxon>
        <taxon>Laurasiatheria</taxon>
        <taxon>Artiodactyla</taxon>
        <taxon>Ruminantia</taxon>
        <taxon>Pecora</taxon>
        <taxon>Bovidae</taxon>
        <taxon>Bovinae</taxon>
        <taxon>Bos</taxon>
    </lineage>
</organism>
<sequence>MAHYKAADSKREQFRRYLEKSGVLDTLTKVLVALYEEPEKPNSALDFLKHHLGAATPENPEIELLRLELAEMKEKYEAIVEENKKLKTKLAQYEPPQEEKRAE</sequence>
<comment type="function">
    <text evidence="1">May control the transcriptional activity of MYC. Stimulates the activation of E box-dependent transcription by MYC (By similarity).</text>
</comment>
<comment type="subunit">
    <text evidence="2">Binds via its C-terminal region to the N-terminal region of MYC. Associates with AKAP1/S-AKAP84. Interacts with MYCBPAP. Interacts with CFAP91.</text>
</comment>
<comment type="subcellular location">
    <subcellularLocation>
        <location evidence="1">Cytoplasm</location>
    </subcellularLocation>
    <subcellularLocation>
        <location evidence="1">Nucleus</location>
    </subcellularLocation>
    <text evidence="1">Translocates into the nucleus in the S phase of the cell cycle.</text>
</comment>
<comment type="similarity">
    <text evidence="3">Belongs to the AMY1 family.</text>
</comment>
<reference key="1">
    <citation type="submission" date="2005-11" db="EMBL/GenBank/DDBJ databases">
        <authorList>
            <consortium name="NIH - Mammalian Gene Collection (MGC) project"/>
        </authorList>
    </citation>
    <scope>NUCLEOTIDE SEQUENCE [LARGE SCALE MRNA]</scope>
    <source>
        <strain>Crossbred X Angus</strain>
        <tissue>Liver</tissue>
    </source>
</reference>
<accession>Q2TBP7</accession>
<dbReference type="EMBL" id="BC109848">
    <property type="protein sequence ID" value="AAI09849.1"/>
    <property type="molecule type" value="mRNA"/>
</dbReference>
<dbReference type="RefSeq" id="NP_001033654.1">
    <property type="nucleotide sequence ID" value="NM_001038565.2"/>
</dbReference>
<dbReference type="SMR" id="Q2TBP7"/>
<dbReference type="FunCoup" id="Q2TBP7">
    <property type="interactions" value="765"/>
</dbReference>
<dbReference type="STRING" id="9913.ENSBTAP00000040445"/>
<dbReference type="PaxDb" id="9913-ENSBTAP00000040445"/>
<dbReference type="PeptideAtlas" id="Q2TBP7"/>
<dbReference type="GeneID" id="539291"/>
<dbReference type="KEGG" id="bta:539291"/>
<dbReference type="CTD" id="26292"/>
<dbReference type="eggNOG" id="ENOG502S2IC">
    <property type="taxonomic scope" value="Eukaryota"/>
</dbReference>
<dbReference type="HOGENOM" id="CLU_135895_0_1_1"/>
<dbReference type="InParanoid" id="Q2TBP7"/>
<dbReference type="OrthoDB" id="9683867at2759"/>
<dbReference type="TreeFam" id="TF329224"/>
<dbReference type="Proteomes" id="UP000009136">
    <property type="component" value="Unplaced"/>
</dbReference>
<dbReference type="GO" id="GO:0005737">
    <property type="term" value="C:cytoplasm"/>
    <property type="evidence" value="ECO:0007669"/>
    <property type="project" value="UniProtKB-SubCell"/>
</dbReference>
<dbReference type="GO" id="GO:0005634">
    <property type="term" value="C:nucleus"/>
    <property type="evidence" value="ECO:0000250"/>
    <property type="project" value="UniProtKB"/>
</dbReference>
<dbReference type="GO" id="GO:0003713">
    <property type="term" value="F:transcription coactivator activity"/>
    <property type="evidence" value="ECO:0000250"/>
    <property type="project" value="UniProtKB"/>
</dbReference>
<dbReference type="GO" id="GO:0006355">
    <property type="term" value="P:regulation of DNA-templated transcription"/>
    <property type="evidence" value="ECO:0000250"/>
    <property type="project" value="UniProtKB"/>
</dbReference>
<dbReference type="CDD" id="cd21937">
    <property type="entry name" value="ZIP_MycBP-like"/>
    <property type="match status" value="1"/>
</dbReference>
<dbReference type="Gene3D" id="6.10.250.1060">
    <property type="match status" value="1"/>
</dbReference>
<dbReference type="InterPro" id="IPR026060">
    <property type="entry name" value="AMY1"/>
</dbReference>
<dbReference type="PANTHER" id="PTHR13168">
    <property type="entry name" value="ASSOCIATE OF C-MYC AMY-1"/>
    <property type="match status" value="1"/>
</dbReference>
<dbReference type="PANTHER" id="PTHR13168:SF0">
    <property type="entry name" value="C-MYC-BINDING PROTEIN"/>
    <property type="match status" value="1"/>
</dbReference>
<dbReference type="PRINTS" id="PR02028">
    <property type="entry name" value="CMYCBINDINGP"/>
</dbReference>
<name>MYCBP_BOVIN</name>
<gene>
    <name type="primary">MYCBP</name>
    <name type="synonym">AMY1</name>
</gene>
<keyword id="KW-0963">Cytoplasm</keyword>
<keyword id="KW-0539">Nucleus</keyword>
<keyword id="KW-1185">Reference proteome</keyword>
<keyword id="KW-0804">Transcription</keyword>
<keyword id="KW-0805">Transcription regulation</keyword>
<protein>
    <recommendedName>
        <fullName>c-Myc-binding protein</fullName>
    </recommendedName>
    <alternativeName>
        <fullName>Associate of Myc 1</fullName>
        <shortName>AMY-1</shortName>
    </alternativeName>
</protein>